<feature type="signal peptide" evidence="1">
    <location>
        <begin position="1"/>
        <end position="20"/>
    </location>
</feature>
<feature type="chain" id="PRO_0000015491" description="Interleukin-2">
    <location>
        <begin position="21"/>
        <end position="154"/>
    </location>
</feature>
<feature type="glycosylation site" description="O-linked (GalNAc...) threonine" evidence="1">
    <location>
        <position position="23"/>
    </location>
</feature>
<feature type="disulfide bond" evidence="1">
    <location>
        <begin position="78"/>
        <end position="126"/>
    </location>
</feature>
<dbReference type="EMBL" id="U79187">
    <property type="protein sequence ID" value="AAC12258.1"/>
    <property type="molecule type" value="mRNA"/>
</dbReference>
<dbReference type="SMR" id="O62641"/>
<dbReference type="GlyCosmos" id="O62641">
    <property type="glycosylation" value="1 site, No reported glycans"/>
</dbReference>
<dbReference type="GO" id="GO:0005615">
    <property type="term" value="C:extracellular space"/>
    <property type="evidence" value="ECO:0007669"/>
    <property type="project" value="UniProtKB-KW"/>
</dbReference>
<dbReference type="GO" id="GO:0005125">
    <property type="term" value="F:cytokine activity"/>
    <property type="evidence" value="ECO:0007669"/>
    <property type="project" value="UniProtKB-KW"/>
</dbReference>
<dbReference type="GO" id="GO:0008083">
    <property type="term" value="F:growth factor activity"/>
    <property type="evidence" value="ECO:0007669"/>
    <property type="project" value="UniProtKB-KW"/>
</dbReference>
<dbReference type="GO" id="GO:0005134">
    <property type="term" value="F:interleukin-2 receptor binding"/>
    <property type="evidence" value="ECO:0007669"/>
    <property type="project" value="InterPro"/>
</dbReference>
<dbReference type="GO" id="GO:0002250">
    <property type="term" value="P:adaptive immune response"/>
    <property type="evidence" value="ECO:0007669"/>
    <property type="project" value="UniProtKB-KW"/>
</dbReference>
<dbReference type="FunFam" id="1.20.1250.10:FF:000025">
    <property type="entry name" value="Interleukin-2"/>
    <property type="match status" value="1"/>
</dbReference>
<dbReference type="Gene3D" id="1.20.1250.10">
    <property type="match status" value="1"/>
</dbReference>
<dbReference type="InterPro" id="IPR009079">
    <property type="entry name" value="4_helix_cytokine-like_core"/>
</dbReference>
<dbReference type="InterPro" id="IPR000779">
    <property type="entry name" value="IL-2"/>
</dbReference>
<dbReference type="InterPro" id="IPR030477">
    <property type="entry name" value="IL-2_CS"/>
</dbReference>
<dbReference type="PANTHER" id="PTHR48487">
    <property type="entry name" value="INTERLEUKIN-2"/>
    <property type="match status" value="1"/>
</dbReference>
<dbReference type="PANTHER" id="PTHR48487:SF1">
    <property type="entry name" value="INTERLEUKIN-2"/>
    <property type="match status" value="1"/>
</dbReference>
<dbReference type="Pfam" id="PF00715">
    <property type="entry name" value="IL2"/>
    <property type="match status" value="1"/>
</dbReference>
<dbReference type="PRINTS" id="PR00265">
    <property type="entry name" value="INTERLEUKIN2"/>
</dbReference>
<dbReference type="SMART" id="SM00189">
    <property type="entry name" value="IL2"/>
    <property type="match status" value="1"/>
</dbReference>
<dbReference type="SUPFAM" id="SSF47266">
    <property type="entry name" value="4-helical cytokines"/>
    <property type="match status" value="1"/>
</dbReference>
<dbReference type="PROSITE" id="PS00424">
    <property type="entry name" value="INTERLEUKIN_2"/>
    <property type="match status" value="1"/>
</dbReference>
<organism>
    <name type="scientific">Mirounga angustirostris</name>
    <name type="common">Northern elephant seal</name>
    <name type="synonym">Macrorhinus angustirostris</name>
    <dbReference type="NCBI Taxonomy" id="9716"/>
    <lineage>
        <taxon>Eukaryota</taxon>
        <taxon>Metazoa</taxon>
        <taxon>Chordata</taxon>
        <taxon>Craniata</taxon>
        <taxon>Vertebrata</taxon>
        <taxon>Euteleostomi</taxon>
        <taxon>Mammalia</taxon>
        <taxon>Eutheria</taxon>
        <taxon>Laurasiatheria</taxon>
        <taxon>Carnivora</taxon>
        <taxon>Caniformia</taxon>
        <taxon>Pinnipedia</taxon>
        <taxon>Phocidae</taxon>
        <taxon>Monachinae</taxon>
        <taxon>Miroungini</taxon>
        <taxon>Mirounga</taxon>
    </lineage>
</organism>
<accession>O62641</accession>
<protein>
    <recommendedName>
        <fullName>Interleukin-2</fullName>
        <shortName>IL-2</shortName>
    </recommendedName>
    <alternativeName>
        <fullName>T-cell growth factor</fullName>
        <shortName>TCGF</shortName>
    </alternativeName>
</protein>
<keyword id="KW-1064">Adaptive immunity</keyword>
<keyword id="KW-0202">Cytokine</keyword>
<keyword id="KW-1015">Disulfide bond</keyword>
<keyword id="KW-0325">Glycoprotein</keyword>
<keyword id="KW-0339">Growth factor</keyword>
<keyword id="KW-0391">Immunity</keyword>
<keyword id="KW-0964">Secreted</keyword>
<keyword id="KW-0732">Signal</keyword>
<proteinExistence type="evidence at transcript level"/>
<evidence type="ECO:0000250" key="1"/>
<evidence type="ECO:0000250" key="2">
    <source>
        <dbReference type="UniProtKB" id="P60568"/>
    </source>
</evidence>
<evidence type="ECO:0000305" key="3"/>
<name>IL2_MIRAN</name>
<sequence>MCKMQLLSCIALSLVLVANSAPTTSSTKETQQQLEQLLLDLRLLLNGVNNYEDPKLSRMLTFKFYTPKKATELTHLQCLAEELKPLEEVLYLAQSKNFHLTDIKELMSNINVTLLKLKGSETRFKCEYDDETATITEFLNKWITFCQSIFSTLT</sequence>
<gene>
    <name type="primary">IL2</name>
</gene>
<reference key="1">
    <citation type="journal article" date="1998" name="J. Wildl. Dis.">
        <title>Sequence and characterization of phocine interleukin 2.</title>
        <authorList>
            <person name="Shoda L.K.M."/>
            <person name="Brown W.C."/>
            <person name="Rice-Ficht A.C."/>
        </authorList>
    </citation>
    <scope>NUCLEOTIDE SEQUENCE [MRNA]</scope>
</reference>
<comment type="function">
    <text evidence="2">Cytokine produced by activated CD4-positive helper T-cells and to a lesser extend activated CD8-positive T-cells and natural killer (NK) cells that plays pivotal roles in the immune response and tolerance. Binds to a receptor complex composed of either the high-affinity trimeric IL-2R (IL2RA/CD25, IL2RB/CD122 and IL2RG/CD132) or the low-affinity dimeric IL-2R (IL2RB and IL2RG). Interaction with the receptor leads to oligomerization and conformation changes in the IL-2R subunits resulting in downstream signaling starting with phosphorylation of JAK1 and JAK3. In turn, JAK1 and JAK3 phosphorylate the receptor to form a docking site leading to the phosphorylation of several substrates including STAT5. This process leads to activation of several pathways including STAT, phosphoinositide-3-kinase/PI3K and mitogen-activated protein kinase/MAPK pathways. Functions as a T-cell growth factor and can increase NK-cell cytolytic activity as well. Promotes strong proliferation of activated B-cells and subsequently immunoglobulin production. Plays a pivotal role in regulating the adaptive immune system by controlling the survival and proliferation of regulatory T-cells, which are required for the maintenance of immune tolerance. Moreover, participates in the differentiation and homeostasis of effector T-cell subsets, including Th1, Th2, Th17 as well as memory CD8-positive T-cells.</text>
</comment>
<comment type="subcellular location">
    <subcellularLocation>
        <location>Secreted</location>
    </subcellularLocation>
</comment>
<comment type="similarity">
    <text evidence="3">Belongs to the IL-2 family.</text>
</comment>